<evidence type="ECO:0000255" key="1">
    <source>
        <dbReference type="HAMAP-Rule" id="MF_01016"/>
    </source>
</evidence>
<name>Y031_CITK8</name>
<protein>
    <recommendedName>
        <fullName evidence="1">Putative transport protein CKO_00031</fullName>
    </recommendedName>
</protein>
<dbReference type="EMBL" id="CP000822">
    <property type="protein sequence ID" value="ABV11210.1"/>
    <property type="molecule type" value="Genomic_DNA"/>
</dbReference>
<dbReference type="RefSeq" id="WP_012000791.1">
    <property type="nucleotide sequence ID" value="NC_009792.1"/>
</dbReference>
<dbReference type="SMR" id="A8ACJ7"/>
<dbReference type="STRING" id="290338.CKO_00031"/>
<dbReference type="GeneID" id="45134340"/>
<dbReference type="KEGG" id="cko:CKO_00031"/>
<dbReference type="HOGENOM" id="CLU_035023_3_1_6"/>
<dbReference type="OrthoDB" id="5166626at2"/>
<dbReference type="Proteomes" id="UP000008148">
    <property type="component" value="Chromosome"/>
</dbReference>
<dbReference type="GO" id="GO:0005886">
    <property type="term" value="C:plasma membrane"/>
    <property type="evidence" value="ECO:0007669"/>
    <property type="project" value="UniProtKB-SubCell"/>
</dbReference>
<dbReference type="GO" id="GO:0008324">
    <property type="term" value="F:monoatomic cation transmembrane transporter activity"/>
    <property type="evidence" value="ECO:0007669"/>
    <property type="project" value="InterPro"/>
</dbReference>
<dbReference type="GO" id="GO:0006813">
    <property type="term" value="P:potassium ion transport"/>
    <property type="evidence" value="ECO:0007669"/>
    <property type="project" value="InterPro"/>
</dbReference>
<dbReference type="FunFam" id="3.30.70.1450:FF:000004">
    <property type="entry name" value="Putative transport protein YidE"/>
    <property type="match status" value="1"/>
</dbReference>
<dbReference type="Gene3D" id="3.30.70.1450">
    <property type="entry name" value="Regulator of K+ conductance, C-terminal domain"/>
    <property type="match status" value="2"/>
</dbReference>
<dbReference type="HAMAP" id="MF_01016">
    <property type="entry name" value="YidE"/>
    <property type="match status" value="1"/>
</dbReference>
<dbReference type="InterPro" id="IPR050144">
    <property type="entry name" value="AAE_transporter"/>
</dbReference>
<dbReference type="InterPro" id="IPR006037">
    <property type="entry name" value="RCK_C"/>
</dbReference>
<dbReference type="InterPro" id="IPR036721">
    <property type="entry name" value="RCK_C_sf"/>
</dbReference>
<dbReference type="InterPro" id="IPR023018">
    <property type="entry name" value="Transpt_YidE_put"/>
</dbReference>
<dbReference type="InterPro" id="IPR006512">
    <property type="entry name" value="YidE_YbjL"/>
</dbReference>
<dbReference type="NCBIfam" id="NF003007">
    <property type="entry name" value="PRK03818.1"/>
    <property type="match status" value="1"/>
</dbReference>
<dbReference type="NCBIfam" id="TIGR01625">
    <property type="entry name" value="YidE_YbjL_dupl"/>
    <property type="match status" value="2"/>
</dbReference>
<dbReference type="PANTHER" id="PTHR30445">
    <property type="entry name" value="K(+)_H(+) ANTIPORTER SUBUNIT KHTT"/>
    <property type="match status" value="1"/>
</dbReference>
<dbReference type="PANTHER" id="PTHR30445:SF3">
    <property type="entry name" value="TRANSPORT PROTEIN YIDE-RELATED"/>
    <property type="match status" value="1"/>
</dbReference>
<dbReference type="Pfam" id="PF06826">
    <property type="entry name" value="Asp-Al_Ex"/>
    <property type="match status" value="2"/>
</dbReference>
<dbReference type="Pfam" id="PF02080">
    <property type="entry name" value="TrkA_C"/>
    <property type="match status" value="2"/>
</dbReference>
<dbReference type="SUPFAM" id="SSF116726">
    <property type="entry name" value="TrkA C-terminal domain-like"/>
    <property type="match status" value="2"/>
</dbReference>
<dbReference type="PROSITE" id="PS51202">
    <property type="entry name" value="RCK_C"/>
    <property type="match status" value="2"/>
</dbReference>
<keyword id="KW-1003">Cell membrane</keyword>
<keyword id="KW-0472">Membrane</keyword>
<keyword id="KW-1185">Reference proteome</keyword>
<keyword id="KW-0677">Repeat</keyword>
<keyword id="KW-0812">Transmembrane</keyword>
<keyword id="KW-1133">Transmembrane helix</keyword>
<keyword id="KW-0813">Transport</keyword>
<sequence length="553" mass="59067">MSDIALTVSVLALVAVVGLWIGNIKVRGVGFGIGGVLFGGIIVGHFVDQAGMTLSSDMLHFIQEFGLILFVYTIGIQVGPGFFASLRVSGLRLNLFAILIVIIGGLVTAILHKIFAIPLPVVLGIFSGAVTNTPALGAGQQILRDLGTPMEAVDQMGMSYAMAYPFGICGILLTMWLMRMIFRVNVEAEAKQHEDTLSNGHSLIQTMNIRVENPNLNNMAIQDVPILNSDKIICSRLKRDETLMVPSPGTIIQSGDLLHLVGQPVDLHNAQLVIGQEVDTSLSTRGTDLRVERVVVTNEKVLGKRIRDLHFKERYDVVISRLNRAGVELVASSDASLQFGDILNLVGRPSSIDAVANVVGNAQQKLQQVQMLPVFIGIGLGVLLGSIPLFVPGFPVALKLGLAGGPLIMALILGRIGSIGKLYWFMPPSANLALRELGIVLFLAVVGLKSGGDFIDTLTQGDGLSWIGYGIFITAIPLITVGLLARIFAKMNYLTLCGMLAGSMTDPPALAFANNLHATSGAAALSYATVYPLVMFLRIITPQLLAVLFWGLG</sequence>
<reference key="1">
    <citation type="submission" date="2007-08" db="EMBL/GenBank/DDBJ databases">
        <authorList>
            <consortium name="The Citrobacter koseri Genome Sequencing Project"/>
            <person name="McClelland M."/>
            <person name="Sanderson E.K."/>
            <person name="Porwollik S."/>
            <person name="Spieth J."/>
            <person name="Clifton W.S."/>
            <person name="Latreille P."/>
            <person name="Courtney L."/>
            <person name="Wang C."/>
            <person name="Pepin K."/>
            <person name="Bhonagiri V."/>
            <person name="Nash W."/>
            <person name="Johnson M."/>
            <person name="Thiruvilangam P."/>
            <person name="Wilson R."/>
        </authorList>
    </citation>
    <scope>NUCLEOTIDE SEQUENCE [LARGE SCALE GENOMIC DNA]</scope>
    <source>
        <strain>ATCC BAA-895 / CDC 4225-83 / SGSC4696</strain>
    </source>
</reference>
<proteinExistence type="inferred from homology"/>
<comment type="subcellular location">
    <subcellularLocation>
        <location evidence="1">Cell membrane</location>
        <topology evidence="1">Multi-pass membrane protein</topology>
    </subcellularLocation>
</comment>
<comment type="similarity">
    <text evidence="1">Belongs to the AAE transporter (TC 2.A.81) family. YidE subfamily.</text>
</comment>
<accession>A8ACJ7</accession>
<organism>
    <name type="scientific">Citrobacter koseri (strain ATCC BAA-895 / CDC 4225-83 / SGSC4696)</name>
    <dbReference type="NCBI Taxonomy" id="290338"/>
    <lineage>
        <taxon>Bacteria</taxon>
        <taxon>Pseudomonadati</taxon>
        <taxon>Pseudomonadota</taxon>
        <taxon>Gammaproteobacteria</taxon>
        <taxon>Enterobacterales</taxon>
        <taxon>Enterobacteriaceae</taxon>
        <taxon>Citrobacter</taxon>
    </lineage>
</organism>
<gene>
    <name type="ordered locus">CKO_00031</name>
</gene>
<feature type="chain" id="PRO_1000063247" description="Putative transport protein CKO_00031">
    <location>
        <begin position="1"/>
        <end position="553"/>
    </location>
</feature>
<feature type="transmembrane region" description="Helical" evidence="1">
    <location>
        <begin position="4"/>
        <end position="24"/>
    </location>
</feature>
<feature type="transmembrane region" description="Helical" evidence="1">
    <location>
        <begin position="28"/>
        <end position="48"/>
    </location>
</feature>
<feature type="transmembrane region" description="Helical" evidence="1">
    <location>
        <begin position="65"/>
        <end position="85"/>
    </location>
</feature>
<feature type="transmembrane region" description="Helical" evidence="1">
    <location>
        <begin position="95"/>
        <end position="115"/>
    </location>
</feature>
<feature type="transmembrane region" description="Helical" evidence="1">
    <location>
        <begin position="158"/>
        <end position="178"/>
    </location>
</feature>
<feature type="transmembrane region" description="Helical" evidence="1">
    <location>
        <begin position="371"/>
        <end position="391"/>
    </location>
</feature>
<feature type="transmembrane region" description="Helical" evidence="1">
    <location>
        <begin position="393"/>
        <end position="413"/>
    </location>
</feature>
<feature type="transmembrane region" description="Helical" evidence="1">
    <location>
        <begin position="437"/>
        <end position="457"/>
    </location>
</feature>
<feature type="transmembrane region" description="Helical" evidence="1">
    <location>
        <begin position="464"/>
        <end position="484"/>
    </location>
</feature>
<feature type="transmembrane region" description="Helical" evidence="1">
    <location>
        <begin position="493"/>
        <end position="513"/>
    </location>
</feature>
<feature type="transmembrane region" description="Helical" evidence="1">
    <location>
        <begin position="533"/>
        <end position="553"/>
    </location>
</feature>
<feature type="domain" description="RCK C-terminal 1" evidence="1">
    <location>
        <begin position="192"/>
        <end position="276"/>
    </location>
</feature>
<feature type="domain" description="RCK C-terminal 2" evidence="1">
    <location>
        <begin position="279"/>
        <end position="361"/>
    </location>
</feature>